<name>RL17_YERPS</name>
<protein>
    <recommendedName>
        <fullName evidence="1">Large ribosomal subunit protein bL17</fullName>
    </recommendedName>
    <alternativeName>
        <fullName evidence="2">50S ribosomal protein L17</fullName>
    </alternativeName>
</protein>
<gene>
    <name evidence="1" type="primary">rplQ</name>
    <name type="ordered locus">YPTB3672</name>
</gene>
<evidence type="ECO:0000255" key="1">
    <source>
        <dbReference type="HAMAP-Rule" id="MF_01368"/>
    </source>
</evidence>
<evidence type="ECO:0000305" key="2"/>
<organism>
    <name type="scientific">Yersinia pseudotuberculosis serotype I (strain IP32953)</name>
    <dbReference type="NCBI Taxonomy" id="273123"/>
    <lineage>
        <taxon>Bacteria</taxon>
        <taxon>Pseudomonadati</taxon>
        <taxon>Pseudomonadota</taxon>
        <taxon>Gammaproteobacteria</taxon>
        <taxon>Enterobacterales</taxon>
        <taxon>Yersiniaceae</taxon>
        <taxon>Yersinia</taxon>
    </lineage>
</organism>
<proteinExistence type="inferred from homology"/>
<reference key="1">
    <citation type="journal article" date="2004" name="Proc. Natl. Acad. Sci. U.S.A.">
        <title>Insights into the evolution of Yersinia pestis through whole-genome comparison with Yersinia pseudotuberculosis.</title>
        <authorList>
            <person name="Chain P.S.G."/>
            <person name="Carniel E."/>
            <person name="Larimer F.W."/>
            <person name="Lamerdin J."/>
            <person name="Stoutland P.O."/>
            <person name="Regala W.M."/>
            <person name="Georgescu A.M."/>
            <person name="Vergez L.M."/>
            <person name="Land M.L."/>
            <person name="Motin V.L."/>
            <person name="Brubaker R.R."/>
            <person name="Fowler J."/>
            <person name="Hinnebusch J."/>
            <person name="Marceau M."/>
            <person name="Medigue C."/>
            <person name="Simonet M."/>
            <person name="Chenal-Francisque V."/>
            <person name="Souza B."/>
            <person name="Dacheux D."/>
            <person name="Elliott J.M."/>
            <person name="Derbise A."/>
            <person name="Hauser L.J."/>
            <person name="Garcia E."/>
        </authorList>
    </citation>
    <scope>NUCLEOTIDE SEQUENCE [LARGE SCALE GENOMIC DNA]</scope>
    <source>
        <strain>IP32953</strain>
    </source>
</reference>
<feature type="chain" id="PRO_0000267976" description="Large ribosomal subunit protein bL17">
    <location>
        <begin position="1"/>
        <end position="129"/>
    </location>
</feature>
<accession>Q664U7</accession>
<sequence>MRHRKSGRQLNRNSSHRQAMFRNMAGSLVRHEIIKTTLPKAKELRRVVEPLITLAKTDNVANRRLAFARTRDNEIVAKLFNELGPRFASRAGGYTRILKCGFRAGDNAPMAYIELVDRAASQAEVVAAE</sequence>
<dbReference type="EMBL" id="BX936398">
    <property type="protein sequence ID" value="CAH22910.1"/>
    <property type="molecule type" value="Genomic_DNA"/>
</dbReference>
<dbReference type="RefSeq" id="WP_002209014.1">
    <property type="nucleotide sequence ID" value="NZ_CP009712.1"/>
</dbReference>
<dbReference type="SMR" id="Q664U7"/>
<dbReference type="GeneID" id="57974369"/>
<dbReference type="KEGG" id="ypo:BZ17_2915"/>
<dbReference type="KEGG" id="yps:YPTB3672"/>
<dbReference type="PATRIC" id="fig|273123.14.peg.3056"/>
<dbReference type="Proteomes" id="UP000001011">
    <property type="component" value="Chromosome"/>
</dbReference>
<dbReference type="GO" id="GO:0022625">
    <property type="term" value="C:cytosolic large ribosomal subunit"/>
    <property type="evidence" value="ECO:0007669"/>
    <property type="project" value="TreeGrafter"/>
</dbReference>
<dbReference type="GO" id="GO:0003735">
    <property type="term" value="F:structural constituent of ribosome"/>
    <property type="evidence" value="ECO:0007669"/>
    <property type="project" value="InterPro"/>
</dbReference>
<dbReference type="GO" id="GO:0006412">
    <property type="term" value="P:translation"/>
    <property type="evidence" value="ECO:0007669"/>
    <property type="project" value="UniProtKB-UniRule"/>
</dbReference>
<dbReference type="FunFam" id="3.90.1030.10:FF:000001">
    <property type="entry name" value="50S ribosomal protein L17"/>
    <property type="match status" value="1"/>
</dbReference>
<dbReference type="Gene3D" id="3.90.1030.10">
    <property type="entry name" value="Ribosomal protein L17"/>
    <property type="match status" value="1"/>
</dbReference>
<dbReference type="HAMAP" id="MF_01368">
    <property type="entry name" value="Ribosomal_bL17"/>
    <property type="match status" value="1"/>
</dbReference>
<dbReference type="InterPro" id="IPR000456">
    <property type="entry name" value="Ribosomal_bL17"/>
</dbReference>
<dbReference type="InterPro" id="IPR047859">
    <property type="entry name" value="Ribosomal_bL17_CS"/>
</dbReference>
<dbReference type="InterPro" id="IPR036373">
    <property type="entry name" value="Ribosomal_bL17_sf"/>
</dbReference>
<dbReference type="NCBIfam" id="TIGR00059">
    <property type="entry name" value="L17"/>
    <property type="match status" value="1"/>
</dbReference>
<dbReference type="PANTHER" id="PTHR14413:SF16">
    <property type="entry name" value="LARGE RIBOSOMAL SUBUNIT PROTEIN BL17M"/>
    <property type="match status" value="1"/>
</dbReference>
<dbReference type="PANTHER" id="PTHR14413">
    <property type="entry name" value="RIBOSOMAL PROTEIN L17"/>
    <property type="match status" value="1"/>
</dbReference>
<dbReference type="Pfam" id="PF01196">
    <property type="entry name" value="Ribosomal_L17"/>
    <property type="match status" value="1"/>
</dbReference>
<dbReference type="SUPFAM" id="SSF64263">
    <property type="entry name" value="Prokaryotic ribosomal protein L17"/>
    <property type="match status" value="1"/>
</dbReference>
<dbReference type="PROSITE" id="PS01167">
    <property type="entry name" value="RIBOSOMAL_L17"/>
    <property type="match status" value="1"/>
</dbReference>
<comment type="subunit">
    <text evidence="1">Part of the 50S ribosomal subunit. Contacts protein L32.</text>
</comment>
<comment type="similarity">
    <text evidence="1">Belongs to the bacterial ribosomal protein bL17 family.</text>
</comment>
<keyword id="KW-0687">Ribonucleoprotein</keyword>
<keyword id="KW-0689">Ribosomal protein</keyword>